<proteinExistence type="inferred from homology"/>
<organism>
    <name type="scientific">Bacillus subtilis (strain 168)</name>
    <dbReference type="NCBI Taxonomy" id="224308"/>
    <lineage>
        <taxon>Bacteria</taxon>
        <taxon>Bacillati</taxon>
        <taxon>Bacillota</taxon>
        <taxon>Bacilli</taxon>
        <taxon>Bacillales</taxon>
        <taxon>Bacillaceae</taxon>
        <taxon>Bacillus</taxon>
    </lineage>
</organism>
<sequence>MDKVYVEGMEFYGYHGVFTEENKLGQRFKVDLTAELDLSKAGQTDDLEQTINYAELYHVCKDIVEGEPVKLVETLAERIAGTVLGKFQPVQQCTVKVIKPDPPIPGHYKSVAIEITRKKS</sequence>
<dbReference type="EC" id="4.1.2.25"/>
<dbReference type="EMBL" id="M34053">
    <property type="protein sequence ID" value="AAA22698.1"/>
    <property type="molecule type" value="Genomic_DNA"/>
</dbReference>
<dbReference type="EMBL" id="D26185">
    <property type="protein sequence ID" value="BAA05313.1"/>
    <property type="molecule type" value="Genomic_DNA"/>
</dbReference>
<dbReference type="EMBL" id="AL009126">
    <property type="protein sequence ID" value="CAB11854.1"/>
    <property type="molecule type" value="Genomic_DNA"/>
</dbReference>
<dbReference type="PIR" id="E37854">
    <property type="entry name" value="E37854"/>
</dbReference>
<dbReference type="RefSeq" id="NP_387959.1">
    <property type="nucleotide sequence ID" value="NC_000964.3"/>
</dbReference>
<dbReference type="RefSeq" id="WP_003242949.1">
    <property type="nucleotide sequence ID" value="NZ_OZ025638.1"/>
</dbReference>
<dbReference type="SMR" id="P28823"/>
<dbReference type="FunCoup" id="P28823">
    <property type="interactions" value="273"/>
</dbReference>
<dbReference type="STRING" id="224308.BSU00780"/>
<dbReference type="jPOST" id="P28823"/>
<dbReference type="PaxDb" id="224308-BSU00780"/>
<dbReference type="EnsemblBacteria" id="CAB11854">
    <property type="protein sequence ID" value="CAB11854"/>
    <property type="gene ID" value="BSU_00780"/>
</dbReference>
<dbReference type="GeneID" id="937976"/>
<dbReference type="KEGG" id="bsu:BSU00780"/>
<dbReference type="PATRIC" id="fig|224308.179.peg.78"/>
<dbReference type="eggNOG" id="COG1539">
    <property type="taxonomic scope" value="Bacteria"/>
</dbReference>
<dbReference type="InParanoid" id="P28823"/>
<dbReference type="OrthoDB" id="9803748at2"/>
<dbReference type="PhylomeDB" id="P28823"/>
<dbReference type="BioCyc" id="BSUB:BSU00780-MONOMER"/>
<dbReference type="UniPathway" id="UPA00077">
    <property type="reaction ID" value="UER00154"/>
</dbReference>
<dbReference type="Proteomes" id="UP000001570">
    <property type="component" value="Chromosome"/>
</dbReference>
<dbReference type="GO" id="GO:0005737">
    <property type="term" value="C:cytoplasm"/>
    <property type="evidence" value="ECO:0000318"/>
    <property type="project" value="GO_Central"/>
</dbReference>
<dbReference type="GO" id="GO:0004150">
    <property type="term" value="F:dihydroneopterin aldolase activity"/>
    <property type="evidence" value="ECO:0000318"/>
    <property type="project" value="GO_Central"/>
</dbReference>
<dbReference type="GO" id="GO:0046656">
    <property type="term" value="P:folic acid biosynthetic process"/>
    <property type="evidence" value="ECO:0007669"/>
    <property type="project" value="UniProtKB-KW"/>
</dbReference>
<dbReference type="GO" id="GO:0046654">
    <property type="term" value="P:tetrahydrofolate biosynthetic process"/>
    <property type="evidence" value="ECO:0007669"/>
    <property type="project" value="UniProtKB-UniPathway"/>
</dbReference>
<dbReference type="CDD" id="cd00534">
    <property type="entry name" value="DHNA_DHNTPE"/>
    <property type="match status" value="1"/>
</dbReference>
<dbReference type="FunFam" id="3.30.1130.10:FF:000003">
    <property type="entry name" value="7,8-dihydroneopterin aldolase"/>
    <property type="match status" value="1"/>
</dbReference>
<dbReference type="Gene3D" id="3.30.1130.10">
    <property type="match status" value="1"/>
</dbReference>
<dbReference type="InterPro" id="IPR006156">
    <property type="entry name" value="Dihydroneopterin_aldolase"/>
</dbReference>
<dbReference type="InterPro" id="IPR006157">
    <property type="entry name" value="FolB_dom"/>
</dbReference>
<dbReference type="InterPro" id="IPR043133">
    <property type="entry name" value="GTP-CH-I_C/QueF"/>
</dbReference>
<dbReference type="NCBIfam" id="TIGR00525">
    <property type="entry name" value="folB"/>
    <property type="match status" value="1"/>
</dbReference>
<dbReference type="NCBIfam" id="TIGR00526">
    <property type="entry name" value="folB_dom"/>
    <property type="match status" value="1"/>
</dbReference>
<dbReference type="PANTHER" id="PTHR42844">
    <property type="entry name" value="DIHYDRONEOPTERIN ALDOLASE 1-RELATED"/>
    <property type="match status" value="1"/>
</dbReference>
<dbReference type="PANTHER" id="PTHR42844:SF1">
    <property type="entry name" value="DIHYDRONEOPTERIN ALDOLASE 1-RELATED"/>
    <property type="match status" value="1"/>
</dbReference>
<dbReference type="Pfam" id="PF02152">
    <property type="entry name" value="FolB"/>
    <property type="match status" value="1"/>
</dbReference>
<dbReference type="SMART" id="SM00905">
    <property type="entry name" value="FolB"/>
    <property type="match status" value="1"/>
</dbReference>
<dbReference type="SUPFAM" id="SSF55620">
    <property type="entry name" value="Tetrahydrobiopterin biosynthesis enzymes-like"/>
    <property type="match status" value="1"/>
</dbReference>
<accession>P28823</accession>
<comment type="function">
    <text evidence="1">Catalyzes the conversion of 7,8-dihydroneopterin to 6-hydroxymethyl-7,8-dihydropterin.</text>
</comment>
<comment type="catalytic activity">
    <reaction evidence="1">
        <text>7,8-dihydroneopterin = 6-hydroxymethyl-7,8-dihydropterin + glycolaldehyde</text>
        <dbReference type="Rhea" id="RHEA:10540"/>
        <dbReference type="ChEBI" id="CHEBI:17001"/>
        <dbReference type="ChEBI" id="CHEBI:17071"/>
        <dbReference type="ChEBI" id="CHEBI:44841"/>
        <dbReference type="EC" id="4.1.2.25"/>
    </reaction>
</comment>
<comment type="pathway">
    <text>Cofactor biosynthesis; tetrahydrofolate biosynthesis; 2-amino-4-hydroxy-6-hydroxymethyl-7,8-dihydropteridine diphosphate from 7,8-dihydroneopterin triphosphate: step 3/4.</text>
</comment>
<comment type="similarity">
    <text evidence="2">Belongs to the DHNA family.</text>
</comment>
<keyword id="KW-0289">Folate biosynthesis</keyword>
<keyword id="KW-0456">Lyase</keyword>
<keyword id="KW-1185">Reference proteome</keyword>
<feature type="chain" id="PRO_0000168265" description="Dihydroneopterin aldolase">
    <location>
        <begin position="1"/>
        <end position="120"/>
    </location>
</feature>
<feature type="active site" description="Proton donor/acceptor" evidence="1">
    <location>
        <position position="99"/>
    </location>
</feature>
<feature type="binding site" evidence="1">
    <location>
        <position position="21"/>
    </location>
    <ligand>
        <name>substrate</name>
    </ligand>
</feature>
<feature type="binding site" evidence="1">
    <location>
        <position position="53"/>
    </location>
    <ligand>
        <name>substrate</name>
    </ligand>
</feature>
<feature type="binding site" evidence="1">
    <location>
        <begin position="72"/>
        <end position="73"/>
    </location>
    <ligand>
        <name>substrate</name>
    </ligand>
</feature>
<name>FOLB_BACSU</name>
<gene>
    <name type="primary">folB</name>
    <name type="synonym">folA</name>
    <name type="synonym">yacE</name>
    <name type="ordered locus">BSU00780</name>
</gene>
<evidence type="ECO:0000250" key="1">
    <source>
        <dbReference type="UniProtKB" id="P0AC16"/>
    </source>
</evidence>
<evidence type="ECO:0000305" key="2"/>
<protein>
    <recommendedName>
        <fullName>Dihydroneopterin aldolase</fullName>
        <shortName>DHNA</shortName>
        <ecNumber>4.1.2.25</ecNumber>
    </recommendedName>
    <alternativeName>
        <fullName>7,8-dihydroneopterin aldolase</fullName>
    </alternativeName>
</protein>
<reference key="1">
    <citation type="journal article" date="1990" name="J. Bacteriol.">
        <title>An apparent Bacillus subtilis folic acid biosynthetic operon containing pab, an amphibolic trpG gene, a third gene required for synthesis of para-aminobenzoic acid, and the dihydropteroate synthase gene.</title>
        <authorList>
            <person name="Slock J."/>
            <person name="Stahly D.P."/>
            <person name="Han C.-Y."/>
            <person name="Six E.W."/>
            <person name="Crawford I.P."/>
        </authorList>
    </citation>
    <scope>NUCLEOTIDE SEQUENCE [GENOMIC DNA]</scope>
    <source>
        <strain>ASB342</strain>
    </source>
</reference>
<reference key="2">
    <citation type="journal article" date="1994" name="DNA Res.">
        <title>Systematic sequencing of the 180 kilobase region of the Bacillus subtilis chromosome containing the replication origin.</title>
        <authorList>
            <person name="Ogasawara N."/>
            <person name="Nakai S."/>
            <person name="Yoshikawa H."/>
        </authorList>
    </citation>
    <scope>NUCLEOTIDE SEQUENCE [GENOMIC DNA]</scope>
    <source>
        <strain>168</strain>
    </source>
</reference>
<reference key="3">
    <citation type="journal article" date="1997" name="Nature">
        <title>The complete genome sequence of the Gram-positive bacterium Bacillus subtilis.</title>
        <authorList>
            <person name="Kunst F."/>
            <person name="Ogasawara N."/>
            <person name="Moszer I."/>
            <person name="Albertini A.M."/>
            <person name="Alloni G."/>
            <person name="Azevedo V."/>
            <person name="Bertero M.G."/>
            <person name="Bessieres P."/>
            <person name="Bolotin A."/>
            <person name="Borchert S."/>
            <person name="Borriss R."/>
            <person name="Boursier L."/>
            <person name="Brans A."/>
            <person name="Braun M."/>
            <person name="Brignell S.C."/>
            <person name="Bron S."/>
            <person name="Brouillet S."/>
            <person name="Bruschi C.V."/>
            <person name="Caldwell B."/>
            <person name="Capuano V."/>
            <person name="Carter N.M."/>
            <person name="Choi S.-K."/>
            <person name="Codani J.-J."/>
            <person name="Connerton I.F."/>
            <person name="Cummings N.J."/>
            <person name="Daniel R.A."/>
            <person name="Denizot F."/>
            <person name="Devine K.M."/>
            <person name="Duesterhoeft A."/>
            <person name="Ehrlich S.D."/>
            <person name="Emmerson P.T."/>
            <person name="Entian K.-D."/>
            <person name="Errington J."/>
            <person name="Fabret C."/>
            <person name="Ferrari E."/>
            <person name="Foulger D."/>
            <person name="Fritz C."/>
            <person name="Fujita M."/>
            <person name="Fujita Y."/>
            <person name="Fuma S."/>
            <person name="Galizzi A."/>
            <person name="Galleron N."/>
            <person name="Ghim S.-Y."/>
            <person name="Glaser P."/>
            <person name="Goffeau A."/>
            <person name="Golightly E.J."/>
            <person name="Grandi G."/>
            <person name="Guiseppi G."/>
            <person name="Guy B.J."/>
            <person name="Haga K."/>
            <person name="Haiech J."/>
            <person name="Harwood C.R."/>
            <person name="Henaut A."/>
            <person name="Hilbert H."/>
            <person name="Holsappel S."/>
            <person name="Hosono S."/>
            <person name="Hullo M.-F."/>
            <person name="Itaya M."/>
            <person name="Jones L.-M."/>
            <person name="Joris B."/>
            <person name="Karamata D."/>
            <person name="Kasahara Y."/>
            <person name="Klaerr-Blanchard M."/>
            <person name="Klein C."/>
            <person name="Kobayashi Y."/>
            <person name="Koetter P."/>
            <person name="Koningstein G."/>
            <person name="Krogh S."/>
            <person name="Kumano M."/>
            <person name="Kurita K."/>
            <person name="Lapidus A."/>
            <person name="Lardinois S."/>
            <person name="Lauber J."/>
            <person name="Lazarevic V."/>
            <person name="Lee S.-M."/>
            <person name="Levine A."/>
            <person name="Liu H."/>
            <person name="Masuda S."/>
            <person name="Mauel C."/>
            <person name="Medigue C."/>
            <person name="Medina N."/>
            <person name="Mellado R.P."/>
            <person name="Mizuno M."/>
            <person name="Moestl D."/>
            <person name="Nakai S."/>
            <person name="Noback M."/>
            <person name="Noone D."/>
            <person name="O'Reilly M."/>
            <person name="Ogawa K."/>
            <person name="Ogiwara A."/>
            <person name="Oudega B."/>
            <person name="Park S.-H."/>
            <person name="Parro V."/>
            <person name="Pohl T.M."/>
            <person name="Portetelle D."/>
            <person name="Porwollik S."/>
            <person name="Prescott A.M."/>
            <person name="Presecan E."/>
            <person name="Pujic P."/>
            <person name="Purnelle B."/>
            <person name="Rapoport G."/>
            <person name="Rey M."/>
            <person name="Reynolds S."/>
            <person name="Rieger M."/>
            <person name="Rivolta C."/>
            <person name="Rocha E."/>
            <person name="Roche B."/>
            <person name="Rose M."/>
            <person name="Sadaie Y."/>
            <person name="Sato T."/>
            <person name="Scanlan E."/>
            <person name="Schleich S."/>
            <person name="Schroeter R."/>
            <person name="Scoffone F."/>
            <person name="Sekiguchi J."/>
            <person name="Sekowska A."/>
            <person name="Seror S.J."/>
            <person name="Serror P."/>
            <person name="Shin B.-S."/>
            <person name="Soldo B."/>
            <person name="Sorokin A."/>
            <person name="Tacconi E."/>
            <person name="Takagi T."/>
            <person name="Takahashi H."/>
            <person name="Takemaru K."/>
            <person name="Takeuchi M."/>
            <person name="Tamakoshi A."/>
            <person name="Tanaka T."/>
            <person name="Terpstra P."/>
            <person name="Tognoni A."/>
            <person name="Tosato V."/>
            <person name="Uchiyama S."/>
            <person name="Vandenbol M."/>
            <person name="Vannier F."/>
            <person name="Vassarotti A."/>
            <person name="Viari A."/>
            <person name="Wambutt R."/>
            <person name="Wedler E."/>
            <person name="Wedler H."/>
            <person name="Weitzenegger T."/>
            <person name="Winters P."/>
            <person name="Wipat A."/>
            <person name="Yamamoto H."/>
            <person name="Yamane K."/>
            <person name="Yasumoto K."/>
            <person name="Yata K."/>
            <person name="Yoshida K."/>
            <person name="Yoshikawa H.-F."/>
            <person name="Zumstein E."/>
            <person name="Yoshikawa H."/>
            <person name="Danchin A."/>
        </authorList>
    </citation>
    <scope>NUCLEOTIDE SEQUENCE [LARGE SCALE GENOMIC DNA]</scope>
    <source>
        <strain>168</strain>
    </source>
</reference>